<keyword id="KW-1003">Cell membrane</keyword>
<keyword id="KW-0966">Cell projection</keyword>
<keyword id="KW-0963">Cytoplasm</keyword>
<keyword id="KW-0968">Cytoplasmic vesicle</keyword>
<keyword id="KW-0268">Exocytosis</keyword>
<keyword id="KW-0342">GTP-binding</keyword>
<keyword id="KW-0378">Hydrolase</keyword>
<keyword id="KW-0449">Lipoprotein</keyword>
<keyword id="KW-0458">Lysosome</keyword>
<keyword id="KW-0460">Magnesium</keyword>
<keyword id="KW-0472">Membrane</keyword>
<keyword id="KW-0479">Metal-binding</keyword>
<keyword id="KW-0488">Methylation</keyword>
<keyword id="KW-0547">Nucleotide-binding</keyword>
<keyword id="KW-0597">Phosphoprotein</keyword>
<keyword id="KW-0636">Prenylation</keyword>
<keyword id="KW-0653">Protein transport</keyword>
<keyword id="KW-1185">Reference proteome</keyword>
<keyword id="KW-0770">Synapse</keyword>
<keyword id="KW-0813">Transport</keyword>
<gene>
    <name type="primary">RAB3A</name>
</gene>
<sequence length="220" mass="24970">MASATDSRYGQKESSDQNFDYMFKILIIGNSSVGKTSFLFRYADDSFTPAFVSTVGIDFKVKTIYRNDKRIKLQIWDTAGQERYRTITTAYYRGAMGFILMYDITNEESFNAVQDWSTQIKTYSWDNAQVLLVGNKCDMEDERVVSSERGRQLADHLGFEFFEASAKDNINVKQTFERLVDVICEKMSESLDTADPAVTGAKQGPQLTDQQAPPHQDCAC</sequence>
<organism>
    <name type="scientific">Sus scrofa</name>
    <name type="common">Pig</name>
    <dbReference type="NCBI Taxonomy" id="9823"/>
    <lineage>
        <taxon>Eukaryota</taxon>
        <taxon>Metazoa</taxon>
        <taxon>Chordata</taxon>
        <taxon>Craniata</taxon>
        <taxon>Vertebrata</taxon>
        <taxon>Euteleostomi</taxon>
        <taxon>Mammalia</taxon>
        <taxon>Eutheria</taxon>
        <taxon>Laurasiatheria</taxon>
        <taxon>Artiodactyla</taxon>
        <taxon>Suina</taxon>
        <taxon>Suidae</taxon>
        <taxon>Sus</taxon>
    </lineage>
</organism>
<name>RAB3A_PIG</name>
<evidence type="ECO:0000250" key="1"/>
<evidence type="ECO:0000250" key="2">
    <source>
        <dbReference type="UniProtKB" id="P20336"/>
    </source>
</evidence>
<evidence type="ECO:0000250" key="3">
    <source>
        <dbReference type="UniProtKB" id="P63011"/>
    </source>
</evidence>
<evidence type="ECO:0000250" key="4">
    <source>
        <dbReference type="UniProtKB" id="P63012"/>
    </source>
</evidence>
<evidence type="ECO:0000256" key="5">
    <source>
        <dbReference type="SAM" id="MobiDB-lite"/>
    </source>
</evidence>
<evidence type="ECO:0000305" key="6"/>
<comment type="function">
    <text evidence="2 3 4">The small GTPases Rab are key regulators of intracellular membrane trafficking, from the formation of transport vesicles to their fusion with membranes (By similarity). Rabs cycle between an inactive GDP-bound form and an active GTP-bound form that is able to recruit to membranes different sets of downstream effectors directly responsible for vesicle formation, movement, tethering and fusion (By similarity). RAB3A plays a central role in regulated exocytosis and secretion. Controls the recruitment, tethering and docking of secretory vesicles to the plasma membrane (By similarity). Upon stimulation, switches to its active GTP-bound form, cycles to vesicles and recruits effectors such as RIMS1, RIMS2, Rabphilin-3A/RPH3A, RPH3AL or SYTL4 to help the docking of vesicules onto the plasma membrane (By similarity). Upon GTP hydrolysis by GTPase-activating protein, dissociates from the vesicle membrane allowing the exocytosis to proceed (By similarity). Stimulates insulin secretion through interaction with RIMS2 or RPH3AL effectors in pancreatic beta cells (By similarity). Regulates calcium-dependent lysosome exocytosis and plasma membrane repair (PMR) via the interaction with 2 effectors, SYTL4 and myosin-9/MYH9 (By similarity). Acts as a positive regulator of acrosome content secretion in sperm cells by interacting with RIMS1 (By similarity). Also plays a role in the regulation of dopamine release by interacting with synaptotagmin I/SYT (By similarity).</text>
</comment>
<comment type="catalytic activity">
    <reaction evidence="2">
        <text>GTP + H2O = GDP + phosphate + H(+)</text>
        <dbReference type="Rhea" id="RHEA:19669"/>
        <dbReference type="ChEBI" id="CHEBI:15377"/>
        <dbReference type="ChEBI" id="CHEBI:15378"/>
        <dbReference type="ChEBI" id="CHEBI:37565"/>
        <dbReference type="ChEBI" id="CHEBI:43474"/>
        <dbReference type="ChEBI" id="CHEBI:58189"/>
        <dbReference type="EC" id="3.6.5.2"/>
    </reaction>
    <physiologicalReaction direction="left-to-right" evidence="2">
        <dbReference type="Rhea" id="RHEA:19670"/>
    </physiologicalReaction>
</comment>
<comment type="cofactor">
    <cofactor evidence="4">
        <name>Mg(2+)</name>
        <dbReference type="ChEBI" id="CHEBI:18420"/>
    </cofactor>
</comment>
<comment type="activity regulation">
    <text evidence="2">Regulated by guanine nucleotide exchange factors (GEFs) including RAB3IL1 and MADD which promote the exchange of bound GDP for free GTP. Regulated by GTPase activating proteins (GAPs) including RAB3GAP1 and TBC1D10B which increase the GTP hydrolysis activity. Inhibited by GDP dissociation inhibitors (GDIs) which prevent Rab-GDP dissociation.</text>
</comment>
<comment type="subunit">
    <text evidence="2 3 4">Interacts with RIMS1 and RIMS2 (By similarity). Interacts with Rabphilin-3A/RPH3A and Rab effector Noc2/RPH3AL (By similarity). Interacts with SYTL4 (By similarity). Interacts with RAB3IP (By similarity). Interacts with SGSM1 and SGSM3 (By similarity). Interacts with SYT1 (By similarity). Interacts with MYH9; this interaction is essential for lysosome exocytosis and plasma membrane repair (By similarity). Interacts with STXBP1; this interaction promotes RAB3A dissociation from the vesicle membrane (By similarity). Interacts with SNCA (By similarity). Interacts with GDI1, GDI2, CHM and CHML; phosphorylation at Thr-86 disrupts these interactions (By similarity). Interacts with MADD (via uDENN domain); the GTP-bound form is preferred for interaction (By similarity).</text>
</comment>
<comment type="subcellular location">
    <subcellularLocation>
        <location evidence="4">Cytoplasm</location>
        <location evidence="4">Cytosol</location>
    </subcellularLocation>
    <subcellularLocation>
        <location evidence="2">Lysosome</location>
    </subcellularLocation>
    <subcellularLocation>
        <location evidence="4">Cytoplasmic vesicle</location>
        <location evidence="4">Secretory vesicle</location>
    </subcellularLocation>
    <subcellularLocation>
        <location evidence="3">Cell projection</location>
        <location evidence="3">Axon</location>
    </subcellularLocation>
    <subcellularLocation>
        <location evidence="6">Cell membrane</location>
        <topology evidence="6">Lipid-anchor</topology>
        <orientation evidence="6">Cytoplasmic side</orientation>
    </subcellularLocation>
    <subcellularLocation>
        <location evidence="3">Presynapse</location>
    </subcellularLocation>
    <subcellularLocation>
        <location evidence="3">Postsynapse</location>
    </subcellularLocation>
    <text evidence="4">Cycles between a vesicle-associated GTP-bound form and a cytosolic GDP-bound form.</text>
</comment>
<comment type="domain">
    <text evidence="4">Switch 1, switch 2 and the interswitch regions are characteristic of Rab GTPases and mediate the interactions with Rab downstream effectors. The switch regions undergo conformational changes upon nucleotide binding which drives interaction with specific sets of effector proteins, with most effectors only binding to GTP-bound Rab.</text>
</comment>
<comment type="PTM">
    <text evidence="2">Phosphorylation of Thr-86 in the switch II region by LRRK2 prevents the association of RAB regulatory proteins, including CHM, CHML and RAB GDP dissociation inhibitors GDI1 and GDI2.</text>
</comment>
<comment type="similarity">
    <text evidence="6">Belongs to the small GTPase superfamily. Rab family.</text>
</comment>
<dbReference type="EC" id="3.6.5.2" evidence="2"/>
<dbReference type="EMBL" id="DQ917632">
    <property type="protein sequence ID" value="ABI97177.1"/>
    <property type="molecule type" value="mRNA"/>
</dbReference>
<dbReference type="RefSeq" id="NP_001116651.1">
    <property type="nucleotide sequence ID" value="NM_001123179.1"/>
</dbReference>
<dbReference type="RefSeq" id="XP_005654944.1">
    <property type="nucleotide sequence ID" value="XM_005654887.3"/>
</dbReference>
<dbReference type="SMR" id="Q06AU3"/>
<dbReference type="FunCoup" id="Q06AU3">
    <property type="interactions" value="549"/>
</dbReference>
<dbReference type="STRING" id="9823.ENSSSCP00000014777"/>
<dbReference type="PaxDb" id="9823-ENSSSCP00000014777"/>
<dbReference type="PeptideAtlas" id="Q06AU3"/>
<dbReference type="Ensembl" id="ENSSSCT00070030173.1">
    <property type="protein sequence ID" value="ENSSSCP00070025168.1"/>
    <property type="gene ID" value="ENSSSCG00070015321.1"/>
</dbReference>
<dbReference type="Ensembl" id="ENSSSCT00115022233">
    <property type="protein sequence ID" value="ENSSSCP00115021065"/>
    <property type="gene ID" value="ENSSSCG00115012843"/>
</dbReference>
<dbReference type="GeneID" id="100144498"/>
<dbReference type="KEGG" id="ssc:100144498"/>
<dbReference type="CTD" id="5864"/>
<dbReference type="eggNOG" id="KOG0093">
    <property type="taxonomic scope" value="Eukaryota"/>
</dbReference>
<dbReference type="HOGENOM" id="CLU_041217_10_1_1"/>
<dbReference type="InParanoid" id="Q06AU3"/>
<dbReference type="OMA" id="CSMARDI"/>
<dbReference type="OrthoDB" id="9989112at2759"/>
<dbReference type="TreeFam" id="TF313199"/>
<dbReference type="Reactome" id="R-SSC-181429">
    <property type="pathway name" value="Serotonin Neurotransmitter Release Cycle"/>
</dbReference>
<dbReference type="Reactome" id="R-SSC-181430">
    <property type="pathway name" value="Norepinephrine Neurotransmitter Release Cycle"/>
</dbReference>
<dbReference type="Reactome" id="R-SSC-210500">
    <property type="pathway name" value="Glutamate Neurotransmitter Release Cycle"/>
</dbReference>
<dbReference type="Reactome" id="R-SSC-212676">
    <property type="pathway name" value="Dopamine Neurotransmitter Release Cycle"/>
</dbReference>
<dbReference type="Reactome" id="R-SSC-264642">
    <property type="pathway name" value="Acetylcholine Neurotransmitter Release Cycle"/>
</dbReference>
<dbReference type="Reactome" id="R-SSC-6798695">
    <property type="pathway name" value="Neutrophil degranulation"/>
</dbReference>
<dbReference type="Reactome" id="R-SSC-8876198">
    <property type="pathway name" value="RAB GEFs exchange GTP for GDP on RABs"/>
</dbReference>
<dbReference type="Reactome" id="R-SSC-888590">
    <property type="pathway name" value="GABA synthesis, release, reuptake and degradation"/>
</dbReference>
<dbReference type="Proteomes" id="UP000008227">
    <property type="component" value="Unplaced"/>
</dbReference>
<dbReference type="Proteomes" id="UP000314985">
    <property type="component" value="Chromosome 2"/>
</dbReference>
<dbReference type="Proteomes" id="UP000694570">
    <property type="component" value="Unplaced"/>
</dbReference>
<dbReference type="Proteomes" id="UP000694571">
    <property type="component" value="Unplaced"/>
</dbReference>
<dbReference type="Proteomes" id="UP000694720">
    <property type="component" value="Unplaced"/>
</dbReference>
<dbReference type="Proteomes" id="UP000694722">
    <property type="component" value="Unplaced"/>
</dbReference>
<dbReference type="Proteomes" id="UP000694723">
    <property type="component" value="Unplaced"/>
</dbReference>
<dbReference type="Proteomes" id="UP000694724">
    <property type="component" value="Unplaced"/>
</dbReference>
<dbReference type="Proteomes" id="UP000694725">
    <property type="component" value="Unplaced"/>
</dbReference>
<dbReference type="Proteomes" id="UP000694726">
    <property type="component" value="Unplaced"/>
</dbReference>
<dbReference type="Proteomes" id="UP000694727">
    <property type="component" value="Unplaced"/>
</dbReference>
<dbReference type="Proteomes" id="UP000694728">
    <property type="component" value="Unplaced"/>
</dbReference>
<dbReference type="GO" id="GO:0030424">
    <property type="term" value="C:axon"/>
    <property type="evidence" value="ECO:0000318"/>
    <property type="project" value="GO_Central"/>
</dbReference>
<dbReference type="GO" id="GO:0005829">
    <property type="term" value="C:cytosol"/>
    <property type="evidence" value="ECO:0007669"/>
    <property type="project" value="UniProtKB-SubCell"/>
</dbReference>
<dbReference type="GO" id="GO:0005768">
    <property type="term" value="C:endosome"/>
    <property type="evidence" value="ECO:0000318"/>
    <property type="project" value="GO_Central"/>
</dbReference>
<dbReference type="GO" id="GO:0005764">
    <property type="term" value="C:lysosome"/>
    <property type="evidence" value="ECO:0007669"/>
    <property type="project" value="UniProtKB-SubCell"/>
</dbReference>
<dbReference type="GO" id="GO:0005886">
    <property type="term" value="C:plasma membrane"/>
    <property type="evidence" value="ECO:0000318"/>
    <property type="project" value="GO_Central"/>
</dbReference>
<dbReference type="GO" id="GO:0098794">
    <property type="term" value="C:postsynapse"/>
    <property type="evidence" value="ECO:0000250"/>
    <property type="project" value="UniProtKB"/>
</dbReference>
<dbReference type="GO" id="GO:0098793">
    <property type="term" value="C:presynapse"/>
    <property type="evidence" value="ECO:0000250"/>
    <property type="project" value="UniProtKB"/>
</dbReference>
<dbReference type="GO" id="GO:0048786">
    <property type="term" value="C:presynaptic active zone"/>
    <property type="evidence" value="ECO:0000250"/>
    <property type="project" value="UniProtKB"/>
</dbReference>
<dbReference type="GO" id="GO:0008021">
    <property type="term" value="C:synaptic vesicle"/>
    <property type="evidence" value="ECO:0000250"/>
    <property type="project" value="AgBase"/>
</dbReference>
<dbReference type="GO" id="GO:0030672">
    <property type="term" value="C:synaptic vesicle membrane"/>
    <property type="evidence" value="ECO:0000318"/>
    <property type="project" value="GO_Central"/>
</dbReference>
<dbReference type="GO" id="GO:0005525">
    <property type="term" value="F:GTP binding"/>
    <property type="evidence" value="ECO:0007669"/>
    <property type="project" value="UniProtKB-KW"/>
</dbReference>
<dbReference type="GO" id="GO:0003924">
    <property type="term" value="F:GTPase activity"/>
    <property type="evidence" value="ECO:0000250"/>
    <property type="project" value="AgBase"/>
</dbReference>
<dbReference type="GO" id="GO:0031489">
    <property type="term" value="F:myosin V binding"/>
    <property type="evidence" value="ECO:0000318"/>
    <property type="project" value="GO_Central"/>
</dbReference>
<dbReference type="GO" id="GO:0060478">
    <property type="term" value="P:acrosomal vesicle exocytosis"/>
    <property type="evidence" value="ECO:0000318"/>
    <property type="project" value="GO_Central"/>
</dbReference>
<dbReference type="GO" id="GO:0007409">
    <property type="term" value="P:axonogenesis"/>
    <property type="evidence" value="ECO:0000250"/>
    <property type="project" value="AgBase"/>
</dbReference>
<dbReference type="GO" id="GO:0030324">
    <property type="term" value="P:lung development"/>
    <property type="evidence" value="ECO:0000250"/>
    <property type="project" value="AgBase"/>
</dbReference>
<dbReference type="GO" id="GO:0048790">
    <property type="term" value="P:maintenance of presynaptic active zone structure"/>
    <property type="evidence" value="ECO:0000250"/>
    <property type="project" value="AgBase"/>
</dbReference>
<dbReference type="GO" id="GO:0007005">
    <property type="term" value="P:mitochondrion organization"/>
    <property type="evidence" value="ECO:0000250"/>
    <property type="project" value="AgBase"/>
</dbReference>
<dbReference type="GO" id="GO:0007274">
    <property type="term" value="P:neuromuscular synaptic transmission"/>
    <property type="evidence" value="ECO:0000250"/>
    <property type="project" value="AgBase"/>
</dbReference>
<dbReference type="GO" id="GO:0009791">
    <property type="term" value="P:post-embryonic development"/>
    <property type="evidence" value="ECO:0000250"/>
    <property type="project" value="AgBase"/>
</dbReference>
<dbReference type="GO" id="GO:0015031">
    <property type="term" value="P:protein transport"/>
    <property type="evidence" value="ECO:0007669"/>
    <property type="project" value="UniProtKB-KW"/>
</dbReference>
<dbReference type="GO" id="GO:0017157">
    <property type="term" value="P:regulation of exocytosis"/>
    <property type="evidence" value="ECO:0000250"/>
    <property type="project" value="AgBase"/>
</dbReference>
<dbReference type="GO" id="GO:0031630">
    <property type="term" value="P:regulation of synaptic vesicle fusion to presynaptic active zone membrane"/>
    <property type="evidence" value="ECO:0000250"/>
    <property type="project" value="AgBase"/>
</dbReference>
<dbReference type="GO" id="GO:0003016">
    <property type="term" value="P:respiratory system process"/>
    <property type="evidence" value="ECO:0000250"/>
    <property type="project" value="AgBase"/>
</dbReference>
<dbReference type="GO" id="GO:0051602">
    <property type="term" value="P:response to electrical stimulus"/>
    <property type="evidence" value="ECO:0000250"/>
    <property type="project" value="AgBase"/>
</dbReference>
<dbReference type="GO" id="GO:0050975">
    <property type="term" value="P:sensory perception of touch"/>
    <property type="evidence" value="ECO:0000250"/>
    <property type="project" value="AgBase"/>
</dbReference>
<dbReference type="GO" id="GO:0016079">
    <property type="term" value="P:synaptic vesicle exocytosis"/>
    <property type="evidence" value="ECO:0000250"/>
    <property type="project" value="AgBase"/>
</dbReference>
<dbReference type="GO" id="GO:0016188">
    <property type="term" value="P:synaptic vesicle maturation"/>
    <property type="evidence" value="ECO:0000250"/>
    <property type="project" value="AgBase"/>
</dbReference>
<dbReference type="CDD" id="cd01865">
    <property type="entry name" value="Rab3"/>
    <property type="match status" value="1"/>
</dbReference>
<dbReference type="FunFam" id="3.40.50.300:FF:000206">
    <property type="entry name" value="Ras-related protein Rab-3C"/>
    <property type="match status" value="1"/>
</dbReference>
<dbReference type="Gene3D" id="3.40.50.300">
    <property type="entry name" value="P-loop containing nucleotide triphosphate hydrolases"/>
    <property type="match status" value="1"/>
</dbReference>
<dbReference type="InterPro" id="IPR027417">
    <property type="entry name" value="P-loop_NTPase"/>
</dbReference>
<dbReference type="InterPro" id="IPR037872">
    <property type="entry name" value="Rab3"/>
</dbReference>
<dbReference type="InterPro" id="IPR005225">
    <property type="entry name" value="Small_GTP-bd"/>
</dbReference>
<dbReference type="InterPro" id="IPR001806">
    <property type="entry name" value="Small_GTPase"/>
</dbReference>
<dbReference type="InterPro" id="IPR050305">
    <property type="entry name" value="Small_GTPase_Rab"/>
</dbReference>
<dbReference type="NCBIfam" id="TIGR00231">
    <property type="entry name" value="small_GTP"/>
    <property type="match status" value="1"/>
</dbReference>
<dbReference type="PANTHER" id="PTHR47980">
    <property type="entry name" value="LD44762P"/>
    <property type="match status" value="1"/>
</dbReference>
<dbReference type="Pfam" id="PF00071">
    <property type="entry name" value="Ras"/>
    <property type="match status" value="1"/>
</dbReference>
<dbReference type="PRINTS" id="PR00449">
    <property type="entry name" value="RASTRNSFRMNG"/>
</dbReference>
<dbReference type="SMART" id="SM00175">
    <property type="entry name" value="RAB"/>
    <property type="match status" value="1"/>
</dbReference>
<dbReference type="SMART" id="SM00176">
    <property type="entry name" value="RAN"/>
    <property type="match status" value="1"/>
</dbReference>
<dbReference type="SMART" id="SM00173">
    <property type="entry name" value="RAS"/>
    <property type="match status" value="1"/>
</dbReference>
<dbReference type="SMART" id="SM00174">
    <property type="entry name" value="RHO"/>
    <property type="match status" value="1"/>
</dbReference>
<dbReference type="SUPFAM" id="SSF52540">
    <property type="entry name" value="P-loop containing nucleoside triphosphate hydrolases"/>
    <property type="match status" value="1"/>
</dbReference>
<dbReference type="PROSITE" id="PS51419">
    <property type="entry name" value="RAB"/>
    <property type="match status" value="1"/>
</dbReference>
<reference key="1">
    <citation type="submission" date="2006-08" db="EMBL/GenBank/DDBJ databases">
        <authorList>
            <person name="Liu G.Y."/>
        </authorList>
    </citation>
    <scope>NUCLEOTIDE SEQUENCE [LARGE SCALE MRNA]</scope>
</reference>
<proteinExistence type="evidence at transcript level"/>
<accession>Q06AU3</accession>
<protein>
    <recommendedName>
        <fullName>Ras-related protein Rab-3A</fullName>
        <ecNumber evidence="2">3.6.5.2</ecNumber>
    </recommendedName>
</protein>
<feature type="chain" id="PRO_0000270789" description="Ras-related protein Rab-3A">
    <location>
        <begin position="1"/>
        <end position="220"/>
    </location>
</feature>
<feature type="region of interest" description="Disordered" evidence="5">
    <location>
        <begin position="194"/>
        <end position="220"/>
    </location>
</feature>
<feature type="short sequence motif" description="Switch 1" evidence="4">
    <location>
        <begin position="49"/>
        <end position="58"/>
    </location>
</feature>
<feature type="short sequence motif" description="Switch 2" evidence="4">
    <location>
        <begin position="80"/>
        <end position="96"/>
    </location>
</feature>
<feature type="binding site" evidence="4">
    <location>
        <position position="31"/>
    </location>
    <ligand>
        <name>GTP</name>
        <dbReference type="ChEBI" id="CHEBI:37565"/>
    </ligand>
</feature>
<feature type="binding site" evidence="4">
    <location>
        <position position="32"/>
    </location>
    <ligand>
        <name>GTP</name>
        <dbReference type="ChEBI" id="CHEBI:37565"/>
    </ligand>
</feature>
<feature type="binding site" evidence="4">
    <location>
        <position position="33"/>
    </location>
    <ligand>
        <name>GTP</name>
        <dbReference type="ChEBI" id="CHEBI:37565"/>
    </ligand>
</feature>
<feature type="binding site" evidence="4">
    <location>
        <position position="34"/>
    </location>
    <ligand>
        <name>GTP</name>
        <dbReference type="ChEBI" id="CHEBI:37565"/>
    </ligand>
</feature>
<feature type="binding site" evidence="4">
    <location>
        <position position="35"/>
    </location>
    <ligand>
        <name>GTP</name>
        <dbReference type="ChEBI" id="CHEBI:37565"/>
    </ligand>
</feature>
<feature type="binding site" evidence="4">
    <location>
        <position position="36"/>
    </location>
    <ligand>
        <name>GTP</name>
        <dbReference type="ChEBI" id="CHEBI:37565"/>
    </ligand>
</feature>
<feature type="binding site" evidence="4">
    <location>
        <position position="36"/>
    </location>
    <ligand>
        <name>Mg(2+)</name>
        <dbReference type="ChEBI" id="CHEBI:18420"/>
    </ligand>
</feature>
<feature type="binding site" evidence="4">
    <location>
        <position position="37"/>
    </location>
    <ligand>
        <name>GTP</name>
        <dbReference type="ChEBI" id="CHEBI:37565"/>
    </ligand>
</feature>
<feature type="binding site" evidence="4">
    <location>
        <position position="48"/>
    </location>
    <ligand>
        <name>GTP</name>
        <dbReference type="ChEBI" id="CHEBI:37565"/>
    </ligand>
</feature>
<feature type="binding site" evidence="4">
    <location>
        <position position="49"/>
    </location>
    <ligand>
        <name>GTP</name>
        <dbReference type="ChEBI" id="CHEBI:37565"/>
    </ligand>
</feature>
<feature type="binding site" evidence="4">
    <location>
        <position position="53"/>
    </location>
    <ligand>
        <name>GTP</name>
        <dbReference type="ChEBI" id="CHEBI:37565"/>
    </ligand>
</feature>
<feature type="binding site" evidence="4">
    <location>
        <position position="54"/>
    </location>
    <ligand>
        <name>GTP</name>
        <dbReference type="ChEBI" id="CHEBI:37565"/>
    </ligand>
</feature>
<feature type="binding site" evidence="4">
    <location>
        <position position="54"/>
    </location>
    <ligand>
        <name>Mg(2+)</name>
        <dbReference type="ChEBI" id="CHEBI:18420"/>
    </ligand>
</feature>
<feature type="binding site" evidence="4">
    <location>
        <position position="77"/>
    </location>
    <ligand>
        <name>Mg(2+)</name>
        <dbReference type="ChEBI" id="CHEBI:18420"/>
    </ligand>
</feature>
<feature type="binding site" evidence="4">
    <location>
        <position position="80"/>
    </location>
    <ligand>
        <name>GTP</name>
        <dbReference type="ChEBI" id="CHEBI:37565"/>
    </ligand>
</feature>
<feature type="binding site" evidence="4">
    <location>
        <position position="135"/>
    </location>
    <ligand>
        <name>GTP</name>
        <dbReference type="ChEBI" id="CHEBI:37565"/>
    </ligand>
</feature>
<feature type="binding site" evidence="4">
    <location>
        <position position="136"/>
    </location>
    <ligand>
        <name>GTP</name>
        <dbReference type="ChEBI" id="CHEBI:37565"/>
    </ligand>
</feature>
<feature type="binding site" evidence="4">
    <location>
        <position position="138"/>
    </location>
    <ligand>
        <name>GTP</name>
        <dbReference type="ChEBI" id="CHEBI:37565"/>
    </ligand>
</feature>
<feature type="binding site" evidence="4">
    <location>
        <position position="166"/>
    </location>
    <ligand>
        <name>GTP</name>
        <dbReference type="ChEBI" id="CHEBI:37565"/>
    </ligand>
</feature>
<feature type="binding site" evidence="4">
    <location>
        <position position="167"/>
    </location>
    <ligand>
        <name>GTP</name>
        <dbReference type="ChEBI" id="CHEBI:37565"/>
    </ligand>
</feature>
<feature type="modified residue" description="Phosphothreonine" evidence="2">
    <location>
        <position position="86"/>
    </location>
</feature>
<feature type="modified residue" description="Phosphoserine" evidence="3">
    <location>
        <position position="188"/>
    </location>
</feature>
<feature type="modified residue" description="Phosphoserine" evidence="3">
    <location>
        <position position="190"/>
    </location>
</feature>
<feature type="modified residue" description="Cysteine methyl ester" evidence="1">
    <location>
        <position position="220"/>
    </location>
</feature>
<feature type="lipid moiety-binding region" description="S-geranylgeranyl cysteine" evidence="1">
    <location>
        <position position="218"/>
    </location>
</feature>
<feature type="lipid moiety-binding region" description="S-geranylgeranyl cysteine" evidence="1">
    <location>
        <position position="220"/>
    </location>
</feature>